<dbReference type="EC" id="7.1.2.2" evidence="1"/>
<dbReference type="EMBL" id="CP000790">
    <property type="protein sequence ID" value="ABU73997.1"/>
    <property type="molecule type" value="Genomic_DNA"/>
</dbReference>
<dbReference type="SMR" id="A7N6Q5"/>
<dbReference type="KEGG" id="vha:VIBHAR_06104"/>
<dbReference type="PATRIC" id="fig|338187.25.peg.4220"/>
<dbReference type="Proteomes" id="UP000008152">
    <property type="component" value="Chromosome II"/>
</dbReference>
<dbReference type="GO" id="GO:0005886">
    <property type="term" value="C:plasma membrane"/>
    <property type="evidence" value="ECO:0007669"/>
    <property type="project" value="UniProtKB-SubCell"/>
</dbReference>
<dbReference type="GO" id="GO:0045259">
    <property type="term" value="C:proton-transporting ATP synthase complex"/>
    <property type="evidence" value="ECO:0007669"/>
    <property type="project" value="UniProtKB-KW"/>
</dbReference>
<dbReference type="GO" id="GO:0005524">
    <property type="term" value="F:ATP binding"/>
    <property type="evidence" value="ECO:0007669"/>
    <property type="project" value="UniProtKB-UniRule"/>
</dbReference>
<dbReference type="GO" id="GO:0016887">
    <property type="term" value="F:ATP hydrolysis activity"/>
    <property type="evidence" value="ECO:0007669"/>
    <property type="project" value="InterPro"/>
</dbReference>
<dbReference type="GO" id="GO:0046933">
    <property type="term" value="F:proton-transporting ATP synthase activity, rotational mechanism"/>
    <property type="evidence" value="ECO:0007669"/>
    <property type="project" value="UniProtKB-UniRule"/>
</dbReference>
<dbReference type="CDD" id="cd18110">
    <property type="entry name" value="ATP-synt_F1_beta_C"/>
    <property type="match status" value="1"/>
</dbReference>
<dbReference type="CDD" id="cd18115">
    <property type="entry name" value="ATP-synt_F1_beta_N"/>
    <property type="match status" value="1"/>
</dbReference>
<dbReference type="CDD" id="cd01133">
    <property type="entry name" value="F1-ATPase_beta_CD"/>
    <property type="match status" value="1"/>
</dbReference>
<dbReference type="FunFam" id="1.10.1140.10:FF:000001">
    <property type="entry name" value="ATP synthase subunit beta"/>
    <property type="match status" value="1"/>
</dbReference>
<dbReference type="FunFam" id="3.40.50.300:FF:000004">
    <property type="entry name" value="ATP synthase subunit beta"/>
    <property type="match status" value="1"/>
</dbReference>
<dbReference type="Gene3D" id="2.40.10.170">
    <property type="match status" value="1"/>
</dbReference>
<dbReference type="Gene3D" id="1.10.1140.10">
    <property type="entry name" value="Bovine Mitochondrial F1-atpase, Atp Synthase Beta Chain, Chain D, domain 3"/>
    <property type="match status" value="1"/>
</dbReference>
<dbReference type="Gene3D" id="3.40.50.300">
    <property type="entry name" value="P-loop containing nucleotide triphosphate hydrolases"/>
    <property type="match status" value="1"/>
</dbReference>
<dbReference type="HAMAP" id="MF_01347">
    <property type="entry name" value="ATP_synth_beta_bact"/>
    <property type="match status" value="1"/>
</dbReference>
<dbReference type="InterPro" id="IPR003593">
    <property type="entry name" value="AAA+_ATPase"/>
</dbReference>
<dbReference type="InterPro" id="IPR055190">
    <property type="entry name" value="ATP-synt_VA_C"/>
</dbReference>
<dbReference type="InterPro" id="IPR005722">
    <property type="entry name" value="ATP_synth_F1_bsu"/>
</dbReference>
<dbReference type="InterPro" id="IPR020003">
    <property type="entry name" value="ATPase_a/bsu_AS"/>
</dbReference>
<dbReference type="InterPro" id="IPR050053">
    <property type="entry name" value="ATPase_alpha/beta_chains"/>
</dbReference>
<dbReference type="InterPro" id="IPR004100">
    <property type="entry name" value="ATPase_F1/V1/A1_a/bsu_N"/>
</dbReference>
<dbReference type="InterPro" id="IPR036121">
    <property type="entry name" value="ATPase_F1/V1/A1_a/bsu_N_sf"/>
</dbReference>
<dbReference type="InterPro" id="IPR000194">
    <property type="entry name" value="ATPase_F1/V1/A1_a/bsu_nucl-bd"/>
</dbReference>
<dbReference type="InterPro" id="IPR024034">
    <property type="entry name" value="ATPase_F1/V1_b/a_C"/>
</dbReference>
<dbReference type="InterPro" id="IPR027417">
    <property type="entry name" value="P-loop_NTPase"/>
</dbReference>
<dbReference type="NCBIfam" id="TIGR01039">
    <property type="entry name" value="atpD"/>
    <property type="match status" value="1"/>
</dbReference>
<dbReference type="PANTHER" id="PTHR15184">
    <property type="entry name" value="ATP SYNTHASE"/>
    <property type="match status" value="1"/>
</dbReference>
<dbReference type="PANTHER" id="PTHR15184:SF71">
    <property type="entry name" value="ATP SYNTHASE SUBUNIT BETA, MITOCHONDRIAL"/>
    <property type="match status" value="1"/>
</dbReference>
<dbReference type="Pfam" id="PF00006">
    <property type="entry name" value="ATP-synt_ab"/>
    <property type="match status" value="1"/>
</dbReference>
<dbReference type="Pfam" id="PF02874">
    <property type="entry name" value="ATP-synt_ab_N"/>
    <property type="match status" value="1"/>
</dbReference>
<dbReference type="Pfam" id="PF22919">
    <property type="entry name" value="ATP-synt_VA_C"/>
    <property type="match status" value="1"/>
</dbReference>
<dbReference type="SMART" id="SM00382">
    <property type="entry name" value="AAA"/>
    <property type="match status" value="1"/>
</dbReference>
<dbReference type="SUPFAM" id="SSF47917">
    <property type="entry name" value="C-terminal domain of alpha and beta subunits of F1 ATP synthase"/>
    <property type="match status" value="1"/>
</dbReference>
<dbReference type="SUPFAM" id="SSF50615">
    <property type="entry name" value="N-terminal domain of alpha and beta subunits of F1 ATP synthase"/>
    <property type="match status" value="1"/>
</dbReference>
<dbReference type="SUPFAM" id="SSF52540">
    <property type="entry name" value="P-loop containing nucleoside triphosphate hydrolases"/>
    <property type="match status" value="1"/>
</dbReference>
<dbReference type="PROSITE" id="PS00152">
    <property type="entry name" value="ATPASE_ALPHA_BETA"/>
    <property type="match status" value="1"/>
</dbReference>
<feature type="chain" id="PRO_0000339599" description="ATP synthase subunit beta 2">
    <location>
        <begin position="1"/>
        <end position="461"/>
    </location>
</feature>
<feature type="binding site" evidence="1">
    <location>
        <begin position="151"/>
        <end position="158"/>
    </location>
    <ligand>
        <name>ATP</name>
        <dbReference type="ChEBI" id="CHEBI:30616"/>
    </ligand>
</feature>
<name>ATPB2_VIBC1</name>
<proteinExistence type="inferred from homology"/>
<accession>A7N6Q5</accession>
<protein>
    <recommendedName>
        <fullName evidence="1">ATP synthase subunit beta 2</fullName>
        <ecNumber evidence="1">7.1.2.2</ecNumber>
    </recommendedName>
    <alternativeName>
        <fullName evidence="1">ATP synthase F1 sector subunit beta 2</fullName>
    </alternativeName>
    <alternativeName>
        <fullName evidence="1">F-ATPase subunit beta 2</fullName>
    </alternativeName>
</protein>
<comment type="function">
    <text evidence="1">Produces ATP from ADP in the presence of a proton gradient across the membrane. The catalytic sites are hosted primarily by the beta subunits.</text>
</comment>
<comment type="catalytic activity">
    <reaction evidence="1">
        <text>ATP + H2O + 4 H(+)(in) = ADP + phosphate + 5 H(+)(out)</text>
        <dbReference type="Rhea" id="RHEA:57720"/>
        <dbReference type="ChEBI" id="CHEBI:15377"/>
        <dbReference type="ChEBI" id="CHEBI:15378"/>
        <dbReference type="ChEBI" id="CHEBI:30616"/>
        <dbReference type="ChEBI" id="CHEBI:43474"/>
        <dbReference type="ChEBI" id="CHEBI:456216"/>
        <dbReference type="EC" id="7.1.2.2"/>
    </reaction>
</comment>
<comment type="subunit">
    <text evidence="1">F-type ATPases have 2 components, CF(1) - the catalytic core - and CF(0) - the membrane proton channel. CF(1) has five subunits: alpha(3), beta(3), gamma(1), delta(1), epsilon(1). CF(0) has three main subunits: a(1), b(2) and c(9-12). The alpha and beta chains form an alternating ring which encloses part of the gamma chain. CF(1) is attached to CF(0) by a central stalk formed by the gamma and epsilon chains, while a peripheral stalk is formed by the delta and b chains.</text>
</comment>
<comment type="subcellular location">
    <subcellularLocation>
        <location evidence="1">Cell inner membrane</location>
        <topology evidence="1">Peripheral membrane protein</topology>
    </subcellularLocation>
</comment>
<comment type="similarity">
    <text evidence="1">Belongs to the ATPase alpha/beta chains family.</text>
</comment>
<gene>
    <name evidence="1" type="primary">atpD2</name>
    <name type="ordered locus">VIBHAR_06104</name>
</gene>
<keyword id="KW-0066">ATP synthesis</keyword>
<keyword id="KW-0067">ATP-binding</keyword>
<keyword id="KW-0997">Cell inner membrane</keyword>
<keyword id="KW-1003">Cell membrane</keyword>
<keyword id="KW-0139">CF(1)</keyword>
<keyword id="KW-0375">Hydrogen ion transport</keyword>
<keyword id="KW-0406">Ion transport</keyword>
<keyword id="KW-0472">Membrane</keyword>
<keyword id="KW-0547">Nucleotide-binding</keyword>
<keyword id="KW-1278">Translocase</keyword>
<keyword id="KW-0813">Transport</keyword>
<sequence>MSIGKIVKVIGAVVDVEFEQGKGPKVYDALKINDGSDGSLMLEVQQQLGGGVVRCIAMGSSDGLKRGLEVESTGNPITVPVGEETLGRIMNVLGHPIDECGPIGEQVSYEIHRDAPSYEEQSNSTALLETGVKVIDLICPFAKGGKIGLFGGAGVGKTVNMMELINNIAKAHSGLSVFTGVGERTREGNDFYYEMKEAGVLDKVAMVYGQMNEPPGNRLRVALTGLTIAERFRDEGRDVLLFVDNIYRYTLAGTEVSALLGRMPSAVGYQPTLAEEMGVLQERITSTKNGSITSIQAVYVPADDLTDPSPATTFAHLDATVVLSRNIAALGLYPAIDPLDSTSRQLDPQVVGQEHYDVARKVQQTLQRYKELKDIIAILGMDELSEEDKRLVSRARKVERFLTQPYHVAEVFTGQPGVFVPLKDTIAGFKALLDGQYDDIPEQAFMYCGNIDEVLEKAKKL</sequence>
<reference key="1">
    <citation type="submission" date="2007-08" db="EMBL/GenBank/DDBJ databases">
        <authorList>
            <consortium name="The Vibrio harveyi Genome Sequencing Project"/>
            <person name="Bassler B."/>
            <person name="Clifton S.W."/>
            <person name="Fulton L."/>
            <person name="Delehaunty K."/>
            <person name="Fronick C."/>
            <person name="Harrison M."/>
            <person name="Markivic C."/>
            <person name="Fulton R."/>
            <person name="Tin-Wollam A.-M."/>
            <person name="Shah N."/>
            <person name="Pepin K."/>
            <person name="Nash W."/>
            <person name="Thiruvilangam P."/>
            <person name="Bhonagiri V."/>
            <person name="Waters C."/>
            <person name="Tu K.C."/>
            <person name="Irgon J."/>
            <person name="Wilson R.K."/>
        </authorList>
    </citation>
    <scope>NUCLEOTIDE SEQUENCE [LARGE SCALE GENOMIC DNA]</scope>
    <source>
        <strain>ATCC BAA-1116 / BB120</strain>
    </source>
</reference>
<organism>
    <name type="scientific">Vibrio campbellii (strain ATCC BAA-1116)</name>
    <dbReference type="NCBI Taxonomy" id="2902295"/>
    <lineage>
        <taxon>Bacteria</taxon>
        <taxon>Pseudomonadati</taxon>
        <taxon>Pseudomonadota</taxon>
        <taxon>Gammaproteobacteria</taxon>
        <taxon>Vibrionales</taxon>
        <taxon>Vibrionaceae</taxon>
        <taxon>Vibrio</taxon>
    </lineage>
</organism>
<evidence type="ECO:0000255" key="1">
    <source>
        <dbReference type="HAMAP-Rule" id="MF_01347"/>
    </source>
</evidence>